<dbReference type="EMBL" id="AL662963">
    <property type="protein sequence ID" value="CAE02098.2"/>
    <property type="molecule type" value="Genomic_DNA"/>
</dbReference>
<dbReference type="EMBL" id="AP014960">
    <property type="status" value="NOT_ANNOTATED_CDS"/>
    <property type="molecule type" value="Genomic_DNA"/>
</dbReference>
<dbReference type="SMR" id="Q7XS75"/>
<dbReference type="FunCoup" id="Q7XS75">
    <property type="interactions" value="3"/>
</dbReference>
<dbReference type="STRING" id="39947.Q7XS75"/>
<dbReference type="PaxDb" id="39947-Q7XS75"/>
<dbReference type="eggNOG" id="ENOG502SK57">
    <property type="taxonomic scope" value="Eukaryota"/>
</dbReference>
<dbReference type="InParanoid" id="Q7XS75"/>
<dbReference type="Proteomes" id="UP000000763">
    <property type="component" value="Chromosome 4"/>
</dbReference>
<dbReference type="Proteomes" id="UP000059680">
    <property type="component" value="Chromosome 4"/>
</dbReference>
<dbReference type="GO" id="GO:0005634">
    <property type="term" value="C:nucleus"/>
    <property type="evidence" value="ECO:0007669"/>
    <property type="project" value="UniProtKB-SubCell"/>
</dbReference>
<dbReference type="GO" id="GO:0003677">
    <property type="term" value="F:DNA binding"/>
    <property type="evidence" value="ECO:0007669"/>
    <property type="project" value="UniProtKB-KW"/>
</dbReference>
<dbReference type="CDD" id="cd10017">
    <property type="entry name" value="B3_DNA"/>
    <property type="match status" value="3"/>
</dbReference>
<dbReference type="Gene3D" id="2.40.330.10">
    <property type="entry name" value="DNA-binding pseudobarrel domain"/>
    <property type="match status" value="3"/>
</dbReference>
<dbReference type="InterPro" id="IPR003340">
    <property type="entry name" value="B3_DNA-bd"/>
</dbReference>
<dbReference type="InterPro" id="IPR015300">
    <property type="entry name" value="DNA-bd_pseudobarrel_sf"/>
</dbReference>
<dbReference type="InterPro" id="IPR039218">
    <property type="entry name" value="REM_fam"/>
</dbReference>
<dbReference type="PANTHER" id="PTHR31674">
    <property type="entry name" value="B3 DOMAIN-CONTAINING PROTEIN REM-LIKE 3-RELATED"/>
    <property type="match status" value="1"/>
</dbReference>
<dbReference type="PANTHER" id="PTHR31674:SF62">
    <property type="entry name" value="B3 DOMAIN-CONTAINING PROTEIN REM14-RELATED"/>
    <property type="match status" value="1"/>
</dbReference>
<dbReference type="Pfam" id="PF02362">
    <property type="entry name" value="B3"/>
    <property type="match status" value="3"/>
</dbReference>
<dbReference type="SMART" id="SM01019">
    <property type="entry name" value="B3"/>
    <property type="match status" value="3"/>
</dbReference>
<dbReference type="SUPFAM" id="SSF101936">
    <property type="entry name" value="DNA-binding pseudobarrel domain"/>
    <property type="match status" value="3"/>
</dbReference>
<dbReference type="PROSITE" id="PS50863">
    <property type="entry name" value="B3"/>
    <property type="match status" value="3"/>
</dbReference>
<name>Y4469_ORYSJ</name>
<comment type="subcellular location">
    <subcellularLocation>
        <location evidence="1">Nucleus</location>
    </subcellularLocation>
</comment>
<feature type="chain" id="PRO_0000378056" description="Putative B3 domain-containing protein Os04g0346900">
    <location>
        <begin position="1"/>
        <end position="427"/>
    </location>
</feature>
<feature type="DNA-binding region" description="TF-B3 1" evidence="1">
    <location>
        <begin position="25"/>
        <end position="118"/>
    </location>
</feature>
<feature type="DNA-binding region" description="TF-B3 2" evidence="1">
    <location>
        <begin position="140"/>
        <end position="236"/>
    </location>
</feature>
<feature type="DNA-binding region" description="TF-B3 3" evidence="1">
    <location>
        <begin position="320"/>
        <end position="427"/>
    </location>
</feature>
<feature type="region of interest" description="Disordered" evidence="2">
    <location>
        <begin position="253"/>
        <end position="309"/>
    </location>
</feature>
<feature type="compositionally biased region" description="Basic residues" evidence="2">
    <location>
        <begin position="263"/>
        <end position="273"/>
    </location>
</feature>
<proteinExistence type="inferred from homology"/>
<protein>
    <recommendedName>
        <fullName>Putative B3 domain-containing protein Os04g0346900</fullName>
    </recommendedName>
</protein>
<sequence length="427" mass="46596">MGSRGDHGGGGGGRGAARATQLKVLVPSSFRKMRICDELAAQLGVGVGGGGAPRAATARVASPLGKAWDVGVVRDGDGRAFLGRGWAEFAAAHGLGVGWFVVLRHGGGVLAVEAFDTTCCLRVFGAPPAEAGRATDTSRKPQFLTVLLPGIMDKMRIPDKFVRDYITGENLNSNMAIILSPLGKSWRVELDKDQSGVFLGGGWLQFLSFHGISRGDVVIFRYEGNLVFKISVFGPNGRQKDFKAKGISIYQGTGEQQEAPSFSRRKCNNKKKSRFGEDDGNQQEMPCSRKGSGNKGRTSDRETKRMRKTRSVYEIGPRSWIKKEINEYVLERCILSLARTFCESIGLVEESSITLMMIDTTSTQGDQGGSSSSSRSWEVTGRRYKDACYLLGAGWRRFCEDNGVRSGDVCVFTVLDTTLWRVDIERC</sequence>
<gene>
    <name type="ordered locus">Os04g0346900</name>
    <name type="ordered locus">LOC_Os04g27960</name>
    <name type="ORF">OSJNBa0020I02.5</name>
</gene>
<evidence type="ECO:0000255" key="1">
    <source>
        <dbReference type="PROSITE-ProRule" id="PRU00326"/>
    </source>
</evidence>
<evidence type="ECO:0000256" key="2">
    <source>
        <dbReference type="SAM" id="MobiDB-lite"/>
    </source>
</evidence>
<accession>Q7XS75</accession>
<keyword id="KW-0238">DNA-binding</keyword>
<keyword id="KW-0539">Nucleus</keyword>
<keyword id="KW-1185">Reference proteome</keyword>
<keyword id="KW-0677">Repeat</keyword>
<keyword id="KW-0804">Transcription</keyword>
<keyword id="KW-0805">Transcription regulation</keyword>
<reference key="1">
    <citation type="journal article" date="2002" name="Nature">
        <title>Sequence and analysis of rice chromosome 4.</title>
        <authorList>
            <person name="Feng Q."/>
            <person name="Zhang Y."/>
            <person name="Hao P."/>
            <person name="Wang S."/>
            <person name="Fu G."/>
            <person name="Huang Y."/>
            <person name="Li Y."/>
            <person name="Zhu J."/>
            <person name="Liu Y."/>
            <person name="Hu X."/>
            <person name="Jia P."/>
            <person name="Zhang Y."/>
            <person name="Zhao Q."/>
            <person name="Ying K."/>
            <person name="Yu S."/>
            <person name="Tang Y."/>
            <person name="Weng Q."/>
            <person name="Zhang L."/>
            <person name="Lu Y."/>
            <person name="Mu J."/>
            <person name="Lu Y."/>
            <person name="Zhang L.S."/>
            <person name="Yu Z."/>
            <person name="Fan D."/>
            <person name="Liu X."/>
            <person name="Lu T."/>
            <person name="Li C."/>
            <person name="Wu Y."/>
            <person name="Sun T."/>
            <person name="Lei H."/>
            <person name="Li T."/>
            <person name="Hu H."/>
            <person name="Guan J."/>
            <person name="Wu M."/>
            <person name="Zhang R."/>
            <person name="Zhou B."/>
            <person name="Chen Z."/>
            <person name="Chen L."/>
            <person name="Jin Z."/>
            <person name="Wang R."/>
            <person name="Yin H."/>
            <person name="Cai Z."/>
            <person name="Ren S."/>
            <person name="Lv G."/>
            <person name="Gu W."/>
            <person name="Zhu G."/>
            <person name="Tu Y."/>
            <person name="Jia J."/>
            <person name="Zhang Y."/>
            <person name="Chen J."/>
            <person name="Kang H."/>
            <person name="Chen X."/>
            <person name="Shao C."/>
            <person name="Sun Y."/>
            <person name="Hu Q."/>
            <person name="Zhang X."/>
            <person name="Zhang W."/>
            <person name="Wang L."/>
            <person name="Ding C."/>
            <person name="Sheng H."/>
            <person name="Gu J."/>
            <person name="Chen S."/>
            <person name="Ni L."/>
            <person name="Zhu F."/>
            <person name="Chen W."/>
            <person name="Lan L."/>
            <person name="Lai Y."/>
            <person name="Cheng Z."/>
            <person name="Gu M."/>
            <person name="Jiang J."/>
            <person name="Li J."/>
            <person name="Hong G."/>
            <person name="Xue Y."/>
            <person name="Han B."/>
        </authorList>
    </citation>
    <scope>NUCLEOTIDE SEQUENCE [LARGE SCALE GENOMIC DNA]</scope>
    <source>
        <strain>cv. Nipponbare</strain>
    </source>
</reference>
<reference key="2">
    <citation type="journal article" date="2005" name="Nature">
        <title>The map-based sequence of the rice genome.</title>
        <authorList>
            <consortium name="International rice genome sequencing project (IRGSP)"/>
        </authorList>
    </citation>
    <scope>NUCLEOTIDE SEQUENCE [LARGE SCALE GENOMIC DNA]</scope>
    <source>
        <strain>cv. Nipponbare</strain>
    </source>
</reference>
<reference key="3">
    <citation type="journal article" date="2013" name="Rice">
        <title>Improvement of the Oryza sativa Nipponbare reference genome using next generation sequence and optical map data.</title>
        <authorList>
            <person name="Kawahara Y."/>
            <person name="de la Bastide M."/>
            <person name="Hamilton J.P."/>
            <person name="Kanamori H."/>
            <person name="McCombie W.R."/>
            <person name="Ouyang S."/>
            <person name="Schwartz D.C."/>
            <person name="Tanaka T."/>
            <person name="Wu J."/>
            <person name="Zhou S."/>
            <person name="Childs K.L."/>
            <person name="Davidson R.M."/>
            <person name="Lin H."/>
            <person name="Quesada-Ocampo L."/>
            <person name="Vaillancourt B."/>
            <person name="Sakai H."/>
            <person name="Lee S.S."/>
            <person name="Kim J."/>
            <person name="Numa H."/>
            <person name="Itoh T."/>
            <person name="Buell C.R."/>
            <person name="Matsumoto T."/>
        </authorList>
    </citation>
    <scope>GENOME REANNOTATION</scope>
    <source>
        <strain>cv. Nipponbare</strain>
    </source>
</reference>
<organism>
    <name type="scientific">Oryza sativa subsp. japonica</name>
    <name type="common">Rice</name>
    <dbReference type="NCBI Taxonomy" id="39947"/>
    <lineage>
        <taxon>Eukaryota</taxon>
        <taxon>Viridiplantae</taxon>
        <taxon>Streptophyta</taxon>
        <taxon>Embryophyta</taxon>
        <taxon>Tracheophyta</taxon>
        <taxon>Spermatophyta</taxon>
        <taxon>Magnoliopsida</taxon>
        <taxon>Liliopsida</taxon>
        <taxon>Poales</taxon>
        <taxon>Poaceae</taxon>
        <taxon>BOP clade</taxon>
        <taxon>Oryzoideae</taxon>
        <taxon>Oryzeae</taxon>
        <taxon>Oryzinae</taxon>
        <taxon>Oryza</taxon>
        <taxon>Oryza sativa</taxon>
    </lineage>
</organism>